<protein>
    <recommendedName>
        <fullName>Neopullulanase SusA</fullName>
        <ecNumber>3.2.1.135</ecNumber>
    </recommendedName>
    <alternativeName>
        <fullName>Starch-utilization system protein A</fullName>
    </alternativeName>
</protein>
<proteinExistence type="evidence at protein level"/>
<reference key="1">
    <citation type="journal article" date="2003" name="Science">
        <title>A genomic view of the human-Bacteroides thetaiotaomicron symbiosis.</title>
        <authorList>
            <person name="Xu J."/>
            <person name="Bjursell M.K."/>
            <person name="Himrod J."/>
            <person name="Deng S."/>
            <person name="Carmichael L.K."/>
            <person name="Chiang H.C."/>
            <person name="Hooper L.V."/>
            <person name="Gordon J.I."/>
        </authorList>
    </citation>
    <scope>NUCLEOTIDE SEQUENCE [LARGE SCALE GENOMIC DNA]</scope>
    <source>
        <strain>ATCC 29148 / DSM 2079 / JCM 5827 / CCUG 10774 / NCTC 10582 / VPI-5482 / E50</strain>
    </source>
</reference>
<reference key="2">
    <citation type="journal article" date="1996" name="J. Bacteriol.">
        <title>Contribution of a neopullulanase, a pullulanase, and an alpha-glucosidase to growth of Bacteroides thetaiotaomicron on starch.</title>
        <authorList>
            <person name="D'Elia J.N."/>
            <person name="Salyers A.A."/>
        </authorList>
    </citation>
    <scope>NUCLEOTIDE SEQUENCE [GENOMIC DNA] OF 1-567</scope>
    <scope>FUNCTION</scope>
    <scope>SUBCELLULAR LOCATION</scope>
    <scope>DISRUPTION PHENOTYPE</scope>
    <source>
        <strain>ATCC 29148 / DSM 2079 / JCM 5827 / CCUG 10774 / NCTC 10582 / VPI-5482 / E50</strain>
    </source>
</reference>
<sequence>MKRNLLFIILLLLLPGLHQVFATSTIKKVAPTFWWAGMKNPELQILLYGDRISSADVSLSADNITLQEVVKQENPNYLVLYLDLSKAAPQNFDIILKQGKKQTKIPYELKQRRPNASAVEGFDSSDVLYLIMPDRFANGNPSNDIIPGMLEGNVDRNEPFARHGGDLKGIENHLDYIADLGVTSIWLNPIQENDMKEGSYHGYAITDYYQVDRRFGSNEEFRKLTQEANAKGLKVVMDMIFNHCGSDNYLFKDMPSKDWFNFEGNYVQTSFKTATQMDPYASDYEKKIAIDGWFTLTMPDFNQRNRHVATYLIQSSIWWIEYAGINGIRQDTHPYADFDMMARWCKAVNEEYPKFNIVGETWLGNNVLISYWQKDSRLAYPKNSNLPTVMDFPLMEEMNKAFDEETTEWNGGLFRLYEYLSQDIVYSHPMSLLTFLDNHDTSRFYRSEADTKNLDRYKQALTFLLTTRGIPQIYYGTEILMAADKANGDGLLRCDFPGGWPNDTKNCFDAANRTPQQNEAFSFMQKLLQWRKGNEVIAKGQLKHFAPNKGVYVYERKYGDKSVVVFLNGNDREQTIDLVPYQEILPASSAFDLLTEKKVELRNELTLPSREIYLLSF</sequence>
<organism>
    <name type="scientific">Bacteroides thetaiotaomicron (strain ATCC 29148 / DSM 2079 / JCM 5827 / CCUG 10774 / NCTC 10582 / VPI-5482 / E50)</name>
    <dbReference type="NCBI Taxonomy" id="226186"/>
    <lineage>
        <taxon>Bacteria</taxon>
        <taxon>Pseudomonadati</taxon>
        <taxon>Bacteroidota</taxon>
        <taxon>Bacteroidia</taxon>
        <taxon>Bacteroidales</taxon>
        <taxon>Bacteroidaceae</taxon>
        <taxon>Bacteroides</taxon>
    </lineage>
</organism>
<name>SUSA_BACTN</name>
<comment type="function">
    <text evidence="3">Neopullulanase that cleaves 1,4-alpha-glucosidic linkages in starch to produce disaccharides or trisaccharides in starch degradation.</text>
</comment>
<comment type="catalytic activity">
    <reaction>
        <text>Hydrolysis of pullulan to panose (6-alpha-D-glucosylmaltose).</text>
        <dbReference type="EC" id="3.2.1.135"/>
    </reaction>
</comment>
<comment type="cofactor">
    <cofactor>
        <name>Ca(2+)</name>
        <dbReference type="ChEBI" id="CHEBI:29108"/>
    </cofactor>
    <text>Binds 1 Ca(2+) ion per subunit.</text>
</comment>
<comment type="pathway">
    <text>Glycan degradation; starch degradation.</text>
</comment>
<comment type="subcellular location">
    <subcellularLocation>
        <location evidence="5">Periplasm</location>
    </subcellularLocation>
</comment>
<comment type="disruption phenotype">
    <text evidence="3">Reduction by 30% of the rate of growth on starch.</text>
</comment>
<comment type="similarity">
    <text evidence="4">Belongs to the glycosyl hydrolase 13 family.</text>
</comment>
<comment type="sequence caution" evidence="4">
    <conflict type="frameshift">
        <sequence resource="EMBL-CDS" id="AAC44670"/>
    </conflict>
</comment>
<accession>Q8A1G0</accession>
<accession>P71093</accession>
<gene>
    <name type="primary">susA</name>
    <name type="ordered locus">BT_3704</name>
</gene>
<evidence type="ECO:0000250" key="1"/>
<evidence type="ECO:0000255" key="2"/>
<evidence type="ECO:0000269" key="3">
    <source>
    </source>
</evidence>
<evidence type="ECO:0000305" key="4"/>
<evidence type="ECO:0000305" key="5">
    <source>
    </source>
</evidence>
<evidence type="ECO:0007829" key="6">
    <source>
        <dbReference type="PDB" id="9FYZ"/>
    </source>
</evidence>
<dbReference type="EC" id="3.2.1.135"/>
<dbReference type="EMBL" id="AE015928">
    <property type="protein sequence ID" value="AAO78809.1"/>
    <property type="molecule type" value="Genomic_DNA"/>
</dbReference>
<dbReference type="EMBL" id="U66897">
    <property type="protein sequence ID" value="AAC44670.1"/>
    <property type="status" value="ALT_FRAME"/>
    <property type="molecule type" value="Genomic_DNA"/>
</dbReference>
<dbReference type="RefSeq" id="NP_812615.1">
    <property type="nucleotide sequence ID" value="NC_004663.1"/>
</dbReference>
<dbReference type="RefSeq" id="WP_008767002.1">
    <property type="nucleotide sequence ID" value="NC_004663.1"/>
</dbReference>
<dbReference type="PDB" id="9FYZ">
    <property type="method" value="X-ray"/>
    <property type="resolution" value="2.43 A"/>
    <property type="chains" value="A/B/C/D/E/F=22-617"/>
</dbReference>
<dbReference type="PDBsum" id="9FYZ"/>
<dbReference type="SMR" id="Q8A1G0"/>
<dbReference type="FunCoup" id="Q8A1G0">
    <property type="interactions" value="23"/>
</dbReference>
<dbReference type="STRING" id="226186.BT_3704"/>
<dbReference type="CAZy" id="GH13">
    <property type="family name" value="Glycoside Hydrolase Family 13"/>
</dbReference>
<dbReference type="PaxDb" id="226186-BT_3704"/>
<dbReference type="EnsemblBacteria" id="AAO78809">
    <property type="protein sequence ID" value="AAO78809"/>
    <property type="gene ID" value="BT_3704"/>
</dbReference>
<dbReference type="GeneID" id="60924873"/>
<dbReference type="KEGG" id="bth:BT_3704"/>
<dbReference type="PATRIC" id="fig|226186.12.peg.3764"/>
<dbReference type="eggNOG" id="COG0366">
    <property type="taxonomic scope" value="Bacteria"/>
</dbReference>
<dbReference type="HOGENOM" id="CLU_006462_7_3_10"/>
<dbReference type="InParanoid" id="Q8A1G0"/>
<dbReference type="OrthoDB" id="9805159at2"/>
<dbReference type="UniPathway" id="UPA00153"/>
<dbReference type="Proteomes" id="UP000001414">
    <property type="component" value="Chromosome"/>
</dbReference>
<dbReference type="GO" id="GO:0042597">
    <property type="term" value="C:periplasmic space"/>
    <property type="evidence" value="ECO:0007669"/>
    <property type="project" value="UniProtKB-SubCell"/>
</dbReference>
<dbReference type="GO" id="GO:0005886">
    <property type="term" value="C:plasma membrane"/>
    <property type="evidence" value="ECO:0000314"/>
    <property type="project" value="MENGO"/>
</dbReference>
<dbReference type="GO" id="GO:0046872">
    <property type="term" value="F:metal ion binding"/>
    <property type="evidence" value="ECO:0007669"/>
    <property type="project" value="UniProtKB-KW"/>
</dbReference>
<dbReference type="GO" id="GO:0031216">
    <property type="term" value="F:neopullulanase activity"/>
    <property type="evidence" value="ECO:0000315"/>
    <property type="project" value="MENGO"/>
</dbReference>
<dbReference type="GO" id="GO:0005983">
    <property type="term" value="P:starch catabolic process"/>
    <property type="evidence" value="ECO:0007669"/>
    <property type="project" value="UniProtKB-UniPathway"/>
</dbReference>
<dbReference type="CDD" id="cd11340">
    <property type="entry name" value="AmyAc_bac_CMD_like_3"/>
    <property type="match status" value="1"/>
</dbReference>
<dbReference type="Gene3D" id="3.20.20.80">
    <property type="entry name" value="Glycosidases"/>
    <property type="match status" value="1"/>
</dbReference>
<dbReference type="Gene3D" id="2.60.40.1180">
    <property type="entry name" value="Golgi alpha-mannosidase II"/>
    <property type="match status" value="1"/>
</dbReference>
<dbReference type="Gene3D" id="2.60.40.10">
    <property type="entry name" value="Immunoglobulins"/>
    <property type="match status" value="1"/>
</dbReference>
<dbReference type="InterPro" id="IPR015171">
    <property type="entry name" value="Cyc-maltodext_N"/>
</dbReference>
<dbReference type="InterPro" id="IPR019492">
    <property type="entry name" value="Cyclo-malto-dextrinase_C"/>
</dbReference>
<dbReference type="InterPro" id="IPR006047">
    <property type="entry name" value="Glyco_hydro_13_cat_dom"/>
</dbReference>
<dbReference type="InterPro" id="IPR013780">
    <property type="entry name" value="Glyco_hydro_b"/>
</dbReference>
<dbReference type="InterPro" id="IPR017853">
    <property type="entry name" value="Glycoside_hydrolase_SF"/>
</dbReference>
<dbReference type="InterPro" id="IPR013783">
    <property type="entry name" value="Ig-like_fold"/>
</dbReference>
<dbReference type="InterPro" id="IPR014756">
    <property type="entry name" value="Ig_E-set"/>
</dbReference>
<dbReference type="PANTHER" id="PTHR10357">
    <property type="entry name" value="ALPHA-AMYLASE FAMILY MEMBER"/>
    <property type="match status" value="1"/>
</dbReference>
<dbReference type="PANTHER" id="PTHR10357:SF210">
    <property type="entry name" value="MALTODEXTRIN GLUCOSIDASE"/>
    <property type="match status" value="1"/>
</dbReference>
<dbReference type="Pfam" id="PF00128">
    <property type="entry name" value="Alpha-amylase"/>
    <property type="match status" value="1"/>
</dbReference>
<dbReference type="Pfam" id="PF10438">
    <property type="entry name" value="Cyc-maltodext_C"/>
    <property type="match status" value="1"/>
</dbReference>
<dbReference type="Pfam" id="PF09087">
    <property type="entry name" value="Cyc-maltodext_N"/>
    <property type="match status" value="1"/>
</dbReference>
<dbReference type="SMART" id="SM00642">
    <property type="entry name" value="Aamy"/>
    <property type="match status" value="1"/>
</dbReference>
<dbReference type="SUPFAM" id="SSF51445">
    <property type="entry name" value="(Trans)glycosidases"/>
    <property type="match status" value="1"/>
</dbReference>
<dbReference type="SUPFAM" id="SSF81296">
    <property type="entry name" value="E set domains"/>
    <property type="match status" value="1"/>
</dbReference>
<dbReference type="SUPFAM" id="SSF51011">
    <property type="entry name" value="Glycosyl hydrolase domain"/>
    <property type="match status" value="1"/>
</dbReference>
<feature type="signal peptide" evidence="2">
    <location>
        <begin position="1"/>
        <end position="22"/>
    </location>
</feature>
<feature type="chain" id="PRO_0000425888" description="Neopullulanase SusA">
    <location>
        <begin position="23"/>
        <end position="617"/>
    </location>
</feature>
<feature type="active site" evidence="1">
    <location>
        <position position="331"/>
    </location>
</feature>
<feature type="active site" evidence="1">
    <location>
        <position position="360"/>
    </location>
</feature>
<feature type="binding site" evidence="1">
    <location>
        <position position="138"/>
    </location>
    <ligand>
        <name>Ca(2+)</name>
        <dbReference type="ChEBI" id="CHEBI:29108"/>
    </ligand>
</feature>
<feature type="binding site" evidence="1">
    <location>
        <position position="143"/>
    </location>
    <ligand>
        <name>Ca(2+)</name>
        <dbReference type="ChEBI" id="CHEBI:29108"/>
    </ligand>
</feature>
<feature type="binding site" evidence="1">
    <location>
        <position position="144"/>
    </location>
    <ligand>
        <name>Ca(2+)</name>
        <dbReference type="ChEBI" id="CHEBI:29108"/>
    </ligand>
</feature>
<feature type="binding site" evidence="1">
    <location>
        <position position="164"/>
    </location>
    <ligand>
        <name>Ca(2+)</name>
        <dbReference type="ChEBI" id="CHEBI:29108"/>
    </ligand>
</feature>
<feature type="binding site" evidence="1">
    <location>
        <position position="166"/>
    </location>
    <ligand>
        <name>Ca(2+)</name>
        <dbReference type="ChEBI" id="CHEBI:29108"/>
    </ligand>
</feature>
<feature type="site" description="Transition state stabilizer" evidence="1">
    <location>
        <position position="440"/>
    </location>
</feature>
<feature type="sequence conflict" description="In Ref. 2; AAC44670." evidence="4" ref="2">
    <original>T</original>
    <variation>I</variation>
    <location>
        <position position="103"/>
    </location>
</feature>
<feature type="sequence conflict" description="In Ref. 2; AAC44670." evidence="4" ref="2">
    <original>C</original>
    <variation>S</variation>
    <location>
        <position position="345"/>
    </location>
</feature>
<feature type="sequence conflict" description="In Ref. 2; AAC44670." evidence="4" ref="2">
    <original>R</original>
    <variation>P</variation>
    <location>
        <position position="556"/>
    </location>
</feature>
<feature type="strand" evidence="6">
    <location>
        <begin position="26"/>
        <end position="32"/>
    </location>
</feature>
<feature type="strand" evidence="6">
    <location>
        <begin position="34"/>
        <end position="37"/>
    </location>
</feature>
<feature type="strand" evidence="6">
    <location>
        <begin position="42"/>
        <end position="51"/>
    </location>
</feature>
<feature type="strand" evidence="6">
    <location>
        <begin position="56"/>
        <end position="60"/>
    </location>
</feature>
<feature type="strand" evidence="6">
    <location>
        <begin position="65"/>
        <end position="71"/>
    </location>
</feature>
<feature type="strand" evidence="6">
    <location>
        <begin position="77"/>
        <end position="83"/>
    </location>
</feature>
<feature type="strand" evidence="6">
    <location>
        <begin position="89"/>
        <end position="98"/>
    </location>
</feature>
<feature type="strand" evidence="6">
    <location>
        <begin position="101"/>
        <end position="110"/>
    </location>
</feature>
<feature type="helix" evidence="6">
    <location>
        <begin position="116"/>
        <end position="118"/>
    </location>
</feature>
<feature type="strand" evidence="6">
    <location>
        <begin position="128"/>
        <end position="131"/>
    </location>
</feature>
<feature type="helix" evidence="6">
    <location>
        <begin position="133"/>
        <end position="135"/>
    </location>
</feature>
<feature type="helix" evidence="6">
    <location>
        <begin position="141"/>
        <end position="143"/>
    </location>
</feature>
<feature type="helix" evidence="6">
    <location>
        <begin position="167"/>
        <end position="172"/>
    </location>
</feature>
<feature type="helix" evidence="6">
    <location>
        <begin position="174"/>
        <end position="180"/>
    </location>
</feature>
<feature type="strand" evidence="6">
    <location>
        <begin position="183"/>
        <end position="188"/>
    </location>
</feature>
<feature type="strand" evidence="6">
    <location>
        <begin position="206"/>
        <end position="211"/>
    </location>
</feature>
<feature type="turn" evidence="6">
    <location>
        <begin position="213"/>
        <end position="215"/>
    </location>
</feature>
<feature type="helix" evidence="6">
    <location>
        <begin position="218"/>
        <end position="230"/>
    </location>
</feature>
<feature type="strand" evidence="6">
    <location>
        <begin position="234"/>
        <end position="239"/>
    </location>
</feature>
<feature type="strand" evidence="6">
    <location>
        <begin position="241"/>
        <end position="243"/>
    </location>
</feature>
<feature type="helix" evidence="6">
    <location>
        <begin position="249"/>
        <end position="252"/>
    </location>
</feature>
<feature type="helix" evidence="6">
    <location>
        <begin position="257"/>
        <end position="259"/>
    </location>
</feature>
<feature type="helix" evidence="6">
    <location>
        <begin position="261"/>
        <end position="264"/>
    </location>
</feature>
<feature type="helix" evidence="6">
    <location>
        <begin position="273"/>
        <end position="276"/>
    </location>
</feature>
<feature type="helix" evidence="6">
    <location>
        <begin position="283"/>
        <end position="291"/>
    </location>
</feature>
<feature type="strand" evidence="6">
    <location>
        <begin position="292"/>
        <end position="295"/>
    </location>
</feature>
<feature type="helix" evidence="6">
    <location>
        <begin position="306"/>
        <end position="323"/>
    </location>
</feature>
<feature type="strand" evidence="6">
    <location>
        <begin position="327"/>
        <end position="330"/>
    </location>
</feature>
<feature type="helix" evidence="6">
    <location>
        <begin position="333"/>
        <end position="335"/>
    </location>
</feature>
<feature type="helix" evidence="6">
    <location>
        <begin position="338"/>
        <end position="351"/>
    </location>
</feature>
<feature type="strand" evidence="6">
    <location>
        <begin position="356"/>
        <end position="359"/>
    </location>
</feature>
<feature type="helix" evidence="6">
    <location>
        <begin position="366"/>
        <end position="371"/>
    </location>
</feature>
<feature type="turn" evidence="6">
    <location>
        <begin position="377"/>
        <end position="381"/>
    </location>
</feature>
<feature type="strand" evidence="6">
    <location>
        <begin position="388"/>
        <end position="390"/>
    </location>
</feature>
<feature type="helix" evidence="6">
    <location>
        <begin position="392"/>
        <end position="401"/>
    </location>
</feature>
<feature type="strand" evidence="6">
    <location>
        <begin position="408"/>
        <end position="411"/>
    </location>
</feature>
<feature type="helix" evidence="6">
    <location>
        <begin position="414"/>
        <end position="421"/>
    </location>
</feature>
<feature type="helix" evidence="6">
    <location>
        <begin position="422"/>
        <end position="425"/>
    </location>
</feature>
<feature type="helix" evidence="6">
    <location>
        <begin position="429"/>
        <end position="431"/>
    </location>
</feature>
<feature type="strand" evidence="6">
    <location>
        <begin position="432"/>
        <end position="436"/>
    </location>
</feature>
<feature type="strand" evidence="6">
    <location>
        <begin position="444"/>
        <end position="447"/>
    </location>
</feature>
<feature type="helix" evidence="6">
    <location>
        <begin position="448"/>
        <end position="452"/>
    </location>
</feature>
<feature type="helix" evidence="6">
    <location>
        <begin position="455"/>
        <end position="466"/>
    </location>
</feature>
<feature type="strand" evidence="6">
    <location>
        <begin position="467"/>
        <end position="474"/>
    </location>
</feature>
<feature type="helix" evidence="6">
    <location>
        <begin position="477"/>
        <end position="479"/>
    </location>
</feature>
<feature type="helix" evidence="6">
    <location>
        <begin position="485"/>
        <end position="487"/>
    </location>
</feature>
<feature type="helix" evidence="6">
    <location>
        <begin position="490"/>
        <end position="493"/>
    </location>
</feature>
<feature type="helix" evidence="6">
    <location>
        <begin position="510"/>
        <end position="512"/>
    </location>
</feature>
<feature type="helix" evidence="6">
    <location>
        <begin position="515"/>
        <end position="531"/>
    </location>
</feature>
<feature type="helix" evidence="6">
    <location>
        <begin position="535"/>
        <end position="539"/>
    </location>
</feature>
<feature type="strand" evidence="6">
    <location>
        <begin position="541"/>
        <end position="548"/>
    </location>
</feature>
<feature type="strand" evidence="6">
    <location>
        <begin position="551"/>
        <end position="558"/>
    </location>
</feature>
<feature type="strand" evidence="6">
    <location>
        <begin position="561"/>
        <end position="568"/>
    </location>
</feature>
<feature type="strand" evidence="6">
    <location>
        <begin position="570"/>
        <end position="572"/>
    </location>
</feature>
<feature type="strand" evidence="6">
    <location>
        <begin position="574"/>
        <end position="577"/>
    </location>
</feature>
<feature type="helix" evidence="6">
    <location>
        <begin position="579"/>
        <end position="584"/>
    </location>
</feature>
<feature type="strand" evidence="6">
    <location>
        <begin position="587"/>
        <end position="592"/>
    </location>
</feature>
<feature type="turn" evidence="6">
    <location>
        <begin position="593"/>
        <end position="595"/>
    </location>
</feature>
<feature type="strand" evidence="6">
    <location>
        <begin position="598"/>
        <end position="600"/>
    </location>
</feature>
<feature type="strand" evidence="6">
    <location>
        <begin position="602"/>
        <end position="607"/>
    </location>
</feature>
<feature type="strand" evidence="6">
    <location>
        <begin position="612"/>
        <end position="617"/>
    </location>
</feature>
<keyword id="KW-0002">3D-structure</keyword>
<keyword id="KW-0119">Carbohydrate metabolism</keyword>
<keyword id="KW-0326">Glycosidase</keyword>
<keyword id="KW-0378">Hydrolase</keyword>
<keyword id="KW-0479">Metal-binding</keyword>
<keyword id="KW-0574">Periplasm</keyword>
<keyword id="KW-0624">Polysaccharide degradation</keyword>
<keyword id="KW-1185">Reference proteome</keyword>
<keyword id="KW-0732">Signal</keyword>